<gene>
    <name evidence="1" type="primary">pyrF</name>
    <name type="ordered locus">Desal_2817</name>
</gene>
<name>PYRF_MARSD</name>
<accession>C6BZZ8</accession>
<dbReference type="EC" id="4.1.1.23" evidence="1"/>
<dbReference type="EMBL" id="CP001649">
    <property type="protein sequence ID" value="ACS80869.1"/>
    <property type="molecule type" value="Genomic_DNA"/>
</dbReference>
<dbReference type="RefSeq" id="WP_015852685.1">
    <property type="nucleotide sequence ID" value="NC_012881.1"/>
</dbReference>
<dbReference type="SMR" id="C6BZZ8"/>
<dbReference type="STRING" id="526222.Desal_2817"/>
<dbReference type="KEGG" id="dsa:Desal_2817"/>
<dbReference type="eggNOG" id="COG0284">
    <property type="taxonomic scope" value="Bacteria"/>
</dbReference>
<dbReference type="HOGENOM" id="CLU_067069_1_0_7"/>
<dbReference type="OrthoDB" id="9806203at2"/>
<dbReference type="UniPathway" id="UPA00070">
    <property type="reaction ID" value="UER00120"/>
</dbReference>
<dbReference type="Proteomes" id="UP000002601">
    <property type="component" value="Chromosome"/>
</dbReference>
<dbReference type="GO" id="GO:0005829">
    <property type="term" value="C:cytosol"/>
    <property type="evidence" value="ECO:0007669"/>
    <property type="project" value="TreeGrafter"/>
</dbReference>
<dbReference type="GO" id="GO:0004590">
    <property type="term" value="F:orotidine-5'-phosphate decarboxylase activity"/>
    <property type="evidence" value="ECO:0007669"/>
    <property type="project" value="UniProtKB-UniRule"/>
</dbReference>
<dbReference type="GO" id="GO:0006207">
    <property type="term" value="P:'de novo' pyrimidine nucleobase biosynthetic process"/>
    <property type="evidence" value="ECO:0007669"/>
    <property type="project" value="InterPro"/>
</dbReference>
<dbReference type="GO" id="GO:0044205">
    <property type="term" value="P:'de novo' UMP biosynthetic process"/>
    <property type="evidence" value="ECO:0007669"/>
    <property type="project" value="UniProtKB-UniRule"/>
</dbReference>
<dbReference type="CDD" id="cd04725">
    <property type="entry name" value="OMP_decarboxylase_like"/>
    <property type="match status" value="1"/>
</dbReference>
<dbReference type="FunFam" id="3.20.20.70:FF:000015">
    <property type="entry name" value="Orotidine 5'-phosphate decarboxylase"/>
    <property type="match status" value="1"/>
</dbReference>
<dbReference type="Gene3D" id="3.20.20.70">
    <property type="entry name" value="Aldolase class I"/>
    <property type="match status" value="1"/>
</dbReference>
<dbReference type="HAMAP" id="MF_01200_B">
    <property type="entry name" value="OMPdecase_type1_B"/>
    <property type="match status" value="1"/>
</dbReference>
<dbReference type="InterPro" id="IPR013785">
    <property type="entry name" value="Aldolase_TIM"/>
</dbReference>
<dbReference type="InterPro" id="IPR014732">
    <property type="entry name" value="OMPdecase"/>
</dbReference>
<dbReference type="InterPro" id="IPR018089">
    <property type="entry name" value="OMPdecase_AS"/>
</dbReference>
<dbReference type="InterPro" id="IPR047596">
    <property type="entry name" value="OMPdecase_bac"/>
</dbReference>
<dbReference type="InterPro" id="IPR001754">
    <property type="entry name" value="OMPdeCOase_dom"/>
</dbReference>
<dbReference type="InterPro" id="IPR011060">
    <property type="entry name" value="RibuloseP-bd_barrel"/>
</dbReference>
<dbReference type="NCBIfam" id="NF001273">
    <property type="entry name" value="PRK00230.1"/>
    <property type="match status" value="1"/>
</dbReference>
<dbReference type="NCBIfam" id="TIGR01740">
    <property type="entry name" value="pyrF"/>
    <property type="match status" value="1"/>
</dbReference>
<dbReference type="PANTHER" id="PTHR32119">
    <property type="entry name" value="OROTIDINE 5'-PHOSPHATE DECARBOXYLASE"/>
    <property type="match status" value="1"/>
</dbReference>
<dbReference type="PANTHER" id="PTHR32119:SF2">
    <property type="entry name" value="OROTIDINE 5'-PHOSPHATE DECARBOXYLASE"/>
    <property type="match status" value="1"/>
</dbReference>
<dbReference type="Pfam" id="PF00215">
    <property type="entry name" value="OMPdecase"/>
    <property type="match status" value="1"/>
</dbReference>
<dbReference type="SMART" id="SM00934">
    <property type="entry name" value="OMPdecase"/>
    <property type="match status" value="1"/>
</dbReference>
<dbReference type="SUPFAM" id="SSF51366">
    <property type="entry name" value="Ribulose-phoshate binding barrel"/>
    <property type="match status" value="1"/>
</dbReference>
<dbReference type="PROSITE" id="PS00156">
    <property type="entry name" value="OMPDECASE"/>
    <property type="match status" value="1"/>
</dbReference>
<protein>
    <recommendedName>
        <fullName evidence="1">Orotidine 5'-phosphate decarboxylase</fullName>
        <ecNumber evidence="1">4.1.1.23</ecNumber>
    </recommendedName>
    <alternativeName>
        <fullName evidence="1">OMP decarboxylase</fullName>
        <shortName evidence="1">OMPDCase</shortName>
        <shortName evidence="1">OMPdecase</shortName>
    </alternativeName>
</protein>
<keyword id="KW-0210">Decarboxylase</keyword>
<keyword id="KW-0456">Lyase</keyword>
<keyword id="KW-0665">Pyrimidine biosynthesis</keyword>
<keyword id="KW-1185">Reference proteome</keyword>
<reference key="1">
    <citation type="submission" date="2009-06" db="EMBL/GenBank/DDBJ databases">
        <title>Complete sequence of Desulfovibrio salexigens DSM 2638.</title>
        <authorList>
            <consortium name="US DOE Joint Genome Institute"/>
            <person name="Lucas S."/>
            <person name="Copeland A."/>
            <person name="Lapidus A."/>
            <person name="Glavina del Rio T."/>
            <person name="Tice H."/>
            <person name="Bruce D."/>
            <person name="Goodwin L."/>
            <person name="Pitluck S."/>
            <person name="Munk A.C."/>
            <person name="Brettin T."/>
            <person name="Detter J.C."/>
            <person name="Han C."/>
            <person name="Tapia R."/>
            <person name="Larimer F."/>
            <person name="Land M."/>
            <person name="Hauser L."/>
            <person name="Kyrpides N."/>
            <person name="Anderson I."/>
            <person name="Wall J.D."/>
            <person name="Arkin A.P."/>
            <person name="Dehal P."/>
            <person name="Chivian D."/>
            <person name="Giles B."/>
            <person name="Hazen T.C."/>
        </authorList>
    </citation>
    <scope>NUCLEOTIDE SEQUENCE [LARGE SCALE GENOMIC DNA]</scope>
    <source>
        <strain>ATCC 14822 / DSM 2638 / NCIMB 8403 / VKM B-1763</strain>
    </source>
</reference>
<feature type="chain" id="PRO_1000213818" description="Orotidine 5'-phosphate decarboxylase">
    <location>
        <begin position="1"/>
        <end position="230"/>
    </location>
</feature>
<feature type="active site" description="Proton donor" evidence="1">
    <location>
        <position position="60"/>
    </location>
</feature>
<feature type="binding site" evidence="1">
    <location>
        <position position="9"/>
    </location>
    <ligand>
        <name>substrate</name>
    </ligand>
</feature>
<feature type="binding site" evidence="1">
    <location>
        <position position="31"/>
    </location>
    <ligand>
        <name>substrate</name>
    </ligand>
</feature>
<feature type="binding site" evidence="1">
    <location>
        <begin position="58"/>
        <end position="67"/>
    </location>
    <ligand>
        <name>substrate</name>
    </ligand>
</feature>
<feature type="binding site" evidence="1">
    <location>
        <position position="120"/>
    </location>
    <ligand>
        <name>substrate</name>
    </ligand>
</feature>
<feature type="binding site" evidence="1">
    <location>
        <position position="180"/>
    </location>
    <ligand>
        <name>substrate</name>
    </ligand>
</feature>
<feature type="binding site" evidence="1">
    <location>
        <position position="188"/>
    </location>
    <ligand>
        <name>substrate</name>
    </ligand>
</feature>
<feature type="binding site" evidence="1">
    <location>
        <position position="208"/>
    </location>
    <ligand>
        <name>substrate</name>
    </ligand>
</feature>
<feature type="binding site" evidence="1">
    <location>
        <position position="209"/>
    </location>
    <ligand>
        <name>substrate</name>
    </ligand>
</feature>
<proteinExistence type="inferred from homology"/>
<evidence type="ECO:0000255" key="1">
    <source>
        <dbReference type="HAMAP-Rule" id="MF_01200"/>
    </source>
</evidence>
<comment type="function">
    <text evidence="1">Catalyzes the decarboxylation of orotidine 5'-monophosphate (OMP) to uridine 5'-monophosphate (UMP).</text>
</comment>
<comment type="catalytic activity">
    <reaction evidence="1">
        <text>orotidine 5'-phosphate + H(+) = UMP + CO2</text>
        <dbReference type="Rhea" id="RHEA:11596"/>
        <dbReference type="ChEBI" id="CHEBI:15378"/>
        <dbReference type="ChEBI" id="CHEBI:16526"/>
        <dbReference type="ChEBI" id="CHEBI:57538"/>
        <dbReference type="ChEBI" id="CHEBI:57865"/>
        <dbReference type="EC" id="4.1.1.23"/>
    </reaction>
</comment>
<comment type="pathway">
    <text evidence="1">Pyrimidine metabolism; UMP biosynthesis via de novo pathway; UMP from orotate: step 2/2.</text>
</comment>
<comment type="subunit">
    <text evidence="1">Homodimer.</text>
</comment>
<comment type="similarity">
    <text evidence="1">Belongs to the OMP decarboxylase family. Type 1 subfamily.</text>
</comment>
<sequence>MSELVVALDFKDAQSAIEMAEKVRGVAPWVKVGLELFCAEGPEIITRFKEMGFKVFVDLKFFDIPNTVKGAVRSATRAGADMLSLHALGGERMAVAAREGRAEGAGGEAGPLLMAITILTSMDEDDIPFPVPNGLGSAVLDLALASSQAGLDGVVCSGLEVEAIKEKCGKDFLALTPGIRPASVSDDQRRVVTPSQAVDRGSNFLVVGRPITGADDPAEAARRIVAEMNS</sequence>
<organism>
    <name type="scientific">Maridesulfovibrio salexigens (strain ATCC 14822 / DSM 2638 / NCIMB 8403 / VKM B-1763)</name>
    <name type="common">Desulfovibrio salexigens</name>
    <dbReference type="NCBI Taxonomy" id="526222"/>
    <lineage>
        <taxon>Bacteria</taxon>
        <taxon>Pseudomonadati</taxon>
        <taxon>Thermodesulfobacteriota</taxon>
        <taxon>Desulfovibrionia</taxon>
        <taxon>Desulfovibrionales</taxon>
        <taxon>Desulfovibrionaceae</taxon>
        <taxon>Maridesulfovibrio</taxon>
    </lineage>
</organism>